<sequence>MVARKFVVRHEDSSFDVDYNTEDGLEVLRFLIFSLTLVPPEEQKIVAEDDNRLVSDESDLASLSERLRLVSVGEDSVENSDAEMLKSDEELARMLQAEEDAIMFQQFVAARDNGEFEGRIRPYVSQVLMYEDPVRQDAARKTVPKDELEEKALVSLAKEGNFEPSKEERDYAFLLQLLFWFKKSFRWVNEPPCDFCGNKTIGQGMGNPLTSELAYGANRVEIYRCTMCPTTTRFPRYNDPLKLVETKKGRCGEWANCFTLYCRTFGYDSRLIMDFTDHVWTECYSHSLKRWIHLDPCEGVYDKPMLYEKGWNKKLNYVIAISKDGVCDVTKRYTKKWHEVLSRRTLTTESSLQDGLRTLTRERRRSLMFESLSKLELRDRNEQEELERNLHSADNASVSLPGRQSGDREWRIMRSEFGSDENSSVSSSSCPVRKCVDDHVTNIYDSFLPILTQFVEDGLPVARTNEVLKMIKQVLVDLKNAPYKTRKARLTLDSDNSSSFPEQFLPALGDLLLALSLKSERDTNGKSVTISVDGKLTKTAIALPVALDALRELVADLSKYQNLNKDSLSFPLVKQNRVCSGSVLASGEELPSGIATAAFDGIQESKWEEPNGAKGCWIVYKTLYNQMHQLIAYELMSANDAPERDPKDWILEGSNDGGSTWCVLDKQTSQVFEERFQRKSYKITTPGFQANLFRFRFLSVRDVNSTSRLQLGSIDLYRSHQ</sequence>
<protein>
    <recommendedName>
        <fullName>Peptide-N(4)-(N-acetyl-beta-glucosaminyl)asparagine amidase</fullName>
        <ecNumber>3.5.1.52</ecNumber>
    </recommendedName>
    <alternativeName>
        <fullName>Peptide:N-glycanase</fullName>
        <shortName>AtPNG1</shortName>
    </alternativeName>
</protein>
<reference key="1">
    <citation type="journal article" date="2000" name="DNA Res.">
        <title>Structural analysis of Arabidopsis thaliana chromosome 5. X. Sequence features of the regions of 3,076,755 bp covered by sixty P1 and TAC clones.</title>
        <authorList>
            <person name="Sato S."/>
            <person name="Nakamura Y."/>
            <person name="Kaneko T."/>
            <person name="Katoh T."/>
            <person name="Asamizu E."/>
            <person name="Kotani H."/>
            <person name="Tabata S."/>
        </authorList>
    </citation>
    <scope>NUCLEOTIDE SEQUENCE [LARGE SCALE GENOMIC DNA]</scope>
    <source>
        <strain>cv. Columbia</strain>
    </source>
</reference>
<reference key="2">
    <citation type="journal article" date="2017" name="Plant J.">
        <title>Araport11: a complete reannotation of the Arabidopsis thaliana reference genome.</title>
        <authorList>
            <person name="Cheng C.Y."/>
            <person name="Krishnakumar V."/>
            <person name="Chan A.P."/>
            <person name="Thibaud-Nissen F."/>
            <person name="Schobel S."/>
            <person name="Town C.D."/>
        </authorList>
    </citation>
    <scope>GENOME REANNOTATION</scope>
    <source>
        <strain>cv. Columbia</strain>
    </source>
</reference>
<reference key="3">
    <citation type="journal article" date="2003" name="Science">
        <title>Empirical analysis of transcriptional activity in the Arabidopsis genome.</title>
        <authorList>
            <person name="Yamada K."/>
            <person name="Lim J."/>
            <person name="Dale J.M."/>
            <person name="Chen H."/>
            <person name="Shinn P."/>
            <person name="Palm C.J."/>
            <person name="Southwick A.M."/>
            <person name="Wu H.C."/>
            <person name="Kim C.J."/>
            <person name="Nguyen M."/>
            <person name="Pham P.K."/>
            <person name="Cheuk R.F."/>
            <person name="Karlin-Newmann G."/>
            <person name="Liu S.X."/>
            <person name="Lam B."/>
            <person name="Sakano H."/>
            <person name="Wu T."/>
            <person name="Yu G."/>
            <person name="Miranda M."/>
            <person name="Quach H.L."/>
            <person name="Tripp M."/>
            <person name="Chang C.H."/>
            <person name="Lee J.M."/>
            <person name="Toriumi M.J."/>
            <person name="Chan M.M."/>
            <person name="Tang C.C."/>
            <person name="Onodera C.S."/>
            <person name="Deng J.M."/>
            <person name="Akiyama K."/>
            <person name="Ansari Y."/>
            <person name="Arakawa T."/>
            <person name="Banh J."/>
            <person name="Banno F."/>
            <person name="Bowser L."/>
            <person name="Brooks S.Y."/>
            <person name="Carninci P."/>
            <person name="Chao Q."/>
            <person name="Choy N."/>
            <person name="Enju A."/>
            <person name="Goldsmith A.D."/>
            <person name="Gurjal M."/>
            <person name="Hansen N.F."/>
            <person name="Hayashizaki Y."/>
            <person name="Johnson-Hopson C."/>
            <person name="Hsuan V.W."/>
            <person name="Iida K."/>
            <person name="Karnes M."/>
            <person name="Khan S."/>
            <person name="Koesema E."/>
            <person name="Ishida J."/>
            <person name="Jiang P.X."/>
            <person name="Jones T."/>
            <person name="Kawai J."/>
            <person name="Kamiya A."/>
            <person name="Meyers C."/>
            <person name="Nakajima M."/>
            <person name="Narusaka M."/>
            <person name="Seki M."/>
            <person name="Sakurai T."/>
            <person name="Satou M."/>
            <person name="Tamse R."/>
            <person name="Vaysberg M."/>
            <person name="Wallender E.K."/>
            <person name="Wong C."/>
            <person name="Yamamura Y."/>
            <person name="Yuan S."/>
            <person name="Shinozaki K."/>
            <person name="Davis R.W."/>
            <person name="Theologis A."/>
            <person name="Ecker J.R."/>
        </authorList>
    </citation>
    <scope>NUCLEOTIDE SEQUENCE [LARGE SCALE MRNA]</scope>
    <source>
        <strain>cv. Columbia</strain>
    </source>
</reference>
<reference key="4">
    <citation type="submission" date="2006-07" db="EMBL/GenBank/DDBJ databases">
        <title>Large-scale analysis of RIKEN Arabidopsis full-length (RAFL) cDNAs.</title>
        <authorList>
            <person name="Totoki Y."/>
            <person name="Seki M."/>
            <person name="Ishida J."/>
            <person name="Nakajima M."/>
            <person name="Enju A."/>
            <person name="Kamiya A."/>
            <person name="Narusaka M."/>
            <person name="Shin-i T."/>
            <person name="Nakagawa M."/>
            <person name="Sakamoto N."/>
            <person name="Oishi K."/>
            <person name="Kohara Y."/>
            <person name="Kobayashi M."/>
            <person name="Toyoda A."/>
            <person name="Sakaki Y."/>
            <person name="Sakurai T."/>
            <person name="Iida K."/>
            <person name="Akiyama K."/>
            <person name="Satou M."/>
            <person name="Toyoda T."/>
            <person name="Konagaya A."/>
            <person name="Carninci P."/>
            <person name="Kawai J."/>
            <person name="Hayashizaki Y."/>
            <person name="Shinozaki K."/>
        </authorList>
    </citation>
    <scope>NUCLEOTIDE SEQUENCE [LARGE SCALE MRNA]</scope>
    <source>
        <strain>cv. Columbia</strain>
    </source>
</reference>
<reference key="5">
    <citation type="journal article" date="2001" name="Biochem. Biophys. Res. Commun.">
        <title>The PUB domain: a putative protein-protein interaction domain implicated in the ubiquitin-proteasome pathway.</title>
        <authorList>
            <person name="Suzuki T."/>
            <person name="Park H."/>
            <person name="Till E.A."/>
            <person name="Lennarz W.J."/>
        </authorList>
    </citation>
    <scope>IDENTIFICATION</scope>
</reference>
<accession>Q9FGY9</accession>
<accession>Q84WJ1</accession>
<evidence type="ECO:0000250" key="1"/>
<evidence type="ECO:0000305" key="2"/>
<dbReference type="EC" id="3.5.1.52"/>
<dbReference type="EMBL" id="AB023033">
    <property type="protein sequence ID" value="BAB10770.1"/>
    <property type="molecule type" value="Genomic_DNA"/>
</dbReference>
<dbReference type="EMBL" id="CP002688">
    <property type="protein sequence ID" value="AED95831.1"/>
    <property type="molecule type" value="Genomic_DNA"/>
</dbReference>
<dbReference type="EMBL" id="AY140065">
    <property type="protein sequence ID" value="AAM98206.1"/>
    <property type="molecule type" value="mRNA"/>
</dbReference>
<dbReference type="EMBL" id="BT003161">
    <property type="protein sequence ID" value="AAO24593.1"/>
    <property type="molecule type" value="mRNA"/>
</dbReference>
<dbReference type="EMBL" id="BT003398">
    <property type="protein sequence ID" value="AAO30061.1"/>
    <property type="molecule type" value="mRNA"/>
</dbReference>
<dbReference type="EMBL" id="AK228156">
    <property type="protein sequence ID" value="BAF00112.1"/>
    <property type="molecule type" value="mRNA"/>
</dbReference>
<dbReference type="RefSeq" id="NP_199768.1">
    <property type="nucleotide sequence ID" value="NM_124335.3"/>
</dbReference>
<dbReference type="SMR" id="Q9FGY9"/>
<dbReference type="BioGRID" id="20265">
    <property type="interactions" value="1"/>
</dbReference>
<dbReference type="FunCoup" id="Q9FGY9">
    <property type="interactions" value="454"/>
</dbReference>
<dbReference type="STRING" id="3702.Q9FGY9"/>
<dbReference type="TCDB" id="3.A.16.1.5">
    <property type="family name" value="the endoplasmic reticular retrotranslocon (er-rt) family"/>
</dbReference>
<dbReference type="iPTMnet" id="Q9FGY9"/>
<dbReference type="PaxDb" id="3702-AT5G49570.1"/>
<dbReference type="ProteomicsDB" id="234789"/>
<dbReference type="EnsemblPlants" id="AT5G49570.1">
    <property type="protein sequence ID" value="AT5G49570.1"/>
    <property type="gene ID" value="AT5G49570"/>
</dbReference>
<dbReference type="GeneID" id="835019"/>
<dbReference type="Gramene" id="AT5G49570.1">
    <property type="protein sequence ID" value="AT5G49570.1"/>
    <property type="gene ID" value="AT5G49570"/>
</dbReference>
<dbReference type="KEGG" id="ath:AT5G49570"/>
<dbReference type="Araport" id="AT5G49570"/>
<dbReference type="TAIR" id="AT5G49570">
    <property type="gene designation" value="PNG1"/>
</dbReference>
<dbReference type="eggNOG" id="KOG0909">
    <property type="taxonomic scope" value="Eukaryota"/>
</dbReference>
<dbReference type="HOGENOM" id="CLU_027996_1_0_1"/>
<dbReference type="InParanoid" id="Q9FGY9"/>
<dbReference type="OMA" id="GIRSSKW"/>
<dbReference type="PhylomeDB" id="Q9FGY9"/>
<dbReference type="BioCyc" id="ARA:AT5G49570-MONOMER"/>
<dbReference type="BRENDA" id="3.5.1.52">
    <property type="organism ID" value="399"/>
</dbReference>
<dbReference type="PRO" id="PR:Q9FGY9"/>
<dbReference type="Proteomes" id="UP000006548">
    <property type="component" value="Chromosome 5"/>
</dbReference>
<dbReference type="ExpressionAtlas" id="Q9FGY9">
    <property type="expression patterns" value="baseline and differential"/>
</dbReference>
<dbReference type="GO" id="GO:0005829">
    <property type="term" value="C:cytosol"/>
    <property type="evidence" value="ECO:0000314"/>
    <property type="project" value="TAIR"/>
</dbReference>
<dbReference type="GO" id="GO:0046872">
    <property type="term" value="F:metal ion binding"/>
    <property type="evidence" value="ECO:0007669"/>
    <property type="project" value="UniProtKB-KW"/>
</dbReference>
<dbReference type="GO" id="GO:0000224">
    <property type="term" value="F:peptide-N4-(N-acetyl-beta-glucosaminyl)asparagine amidase activity"/>
    <property type="evidence" value="ECO:0000314"/>
    <property type="project" value="TAIR"/>
</dbReference>
<dbReference type="GO" id="GO:0010188">
    <property type="term" value="P:response to microbial phytotoxin"/>
    <property type="evidence" value="ECO:0000270"/>
    <property type="project" value="TAIR"/>
</dbReference>
<dbReference type="GO" id="GO:0010193">
    <property type="term" value="P:response to ozone"/>
    <property type="evidence" value="ECO:0000270"/>
    <property type="project" value="TAIR"/>
</dbReference>
<dbReference type="GO" id="GO:0009751">
    <property type="term" value="P:response to salicylic acid"/>
    <property type="evidence" value="ECO:0000270"/>
    <property type="project" value="TAIR"/>
</dbReference>
<dbReference type="FunFam" id="2.20.25.10:FF:000011">
    <property type="entry name" value="peptide-N(4)-(N-acetyl-beta- glucosaminyl)asparagine amidase"/>
    <property type="match status" value="1"/>
</dbReference>
<dbReference type="FunFam" id="2.60.120.260:FF:000110">
    <property type="entry name" value="Peptide-N(4)-(N-acetyl-beta-glucosaminyl)asparagine amidase"/>
    <property type="match status" value="1"/>
</dbReference>
<dbReference type="Gene3D" id="2.20.25.10">
    <property type="match status" value="1"/>
</dbReference>
<dbReference type="Gene3D" id="3.10.620.30">
    <property type="match status" value="1"/>
</dbReference>
<dbReference type="Gene3D" id="2.60.120.260">
    <property type="entry name" value="Galactose-binding domain-like"/>
    <property type="match status" value="1"/>
</dbReference>
<dbReference type="InterPro" id="IPR008979">
    <property type="entry name" value="Galactose-bd-like_sf"/>
</dbReference>
<dbReference type="InterPro" id="IPR038765">
    <property type="entry name" value="Papain-like_cys_pep_sf"/>
</dbReference>
<dbReference type="InterPro" id="IPR002931">
    <property type="entry name" value="Transglutaminase-like"/>
</dbReference>
<dbReference type="PANTHER" id="PTHR48440">
    <property type="match status" value="1"/>
</dbReference>
<dbReference type="PANTHER" id="PTHR48440:SF1">
    <property type="entry name" value="PAW DOMAIN-CONTAINING PROTEIN"/>
    <property type="match status" value="1"/>
</dbReference>
<dbReference type="Pfam" id="PF01841">
    <property type="entry name" value="Transglut_core"/>
    <property type="match status" value="1"/>
</dbReference>
<dbReference type="SMART" id="SM00460">
    <property type="entry name" value="TGc"/>
    <property type="match status" value="1"/>
</dbReference>
<dbReference type="SUPFAM" id="SSF54001">
    <property type="entry name" value="Cysteine proteinases"/>
    <property type="match status" value="1"/>
</dbReference>
<dbReference type="SUPFAM" id="SSF49785">
    <property type="entry name" value="Galactose-binding domain-like"/>
    <property type="match status" value="1"/>
</dbReference>
<name>PNG1_ARATH</name>
<feature type="chain" id="PRO_0000248981" description="Peptide-N(4)-(N-acetyl-beta-glucosaminyl)asparagine amidase">
    <location>
        <begin position="1"/>
        <end position="721"/>
    </location>
</feature>
<feature type="active site" description="Nucleophile" evidence="1">
    <location>
        <position position="251"/>
    </location>
</feature>
<feature type="active site" evidence="1">
    <location>
        <position position="278"/>
    </location>
</feature>
<feature type="active site" evidence="1">
    <location>
        <position position="295"/>
    </location>
</feature>
<feature type="binding site" evidence="1">
    <location>
        <position position="193"/>
    </location>
    <ligand>
        <name>Zn(2+)</name>
        <dbReference type="ChEBI" id="CHEBI:29105"/>
    </ligand>
</feature>
<feature type="binding site" evidence="1">
    <location>
        <position position="196"/>
    </location>
    <ligand>
        <name>Zn(2+)</name>
        <dbReference type="ChEBI" id="CHEBI:29105"/>
    </ligand>
</feature>
<feature type="binding site" evidence="1">
    <location>
        <position position="225"/>
    </location>
    <ligand>
        <name>Zn(2+)</name>
        <dbReference type="ChEBI" id="CHEBI:29105"/>
    </ligand>
</feature>
<feature type="binding site" evidence="1">
    <location>
        <position position="228"/>
    </location>
    <ligand>
        <name>Zn(2+)</name>
        <dbReference type="ChEBI" id="CHEBI:29105"/>
    </ligand>
</feature>
<feature type="sequence conflict" description="In Ref. 3; AAO24593." evidence="2" ref="3">
    <original>L</original>
    <variation>P</variation>
    <location>
        <position position="346"/>
    </location>
</feature>
<comment type="function">
    <text evidence="1">Specifically deglycosylates the denatured form of N-linked glycoproteins in the cytoplasm and assists their proteasome-mediated degradation. Cleaves the beta-aspartyl-glucosamine (GlcNAc) of the glycan and the amide side chain of Asn, converting Asn to Asp. Prefers proteins containing high-mannose over those bearing complex type oligosaccharides. Can recognize misfolded proteins in the endoplasmic reticulum that are exported to the cytosol to be destroyed and deglycosylate them, while it has no activity toward native proteins. Deglycosylation is a prerequisite for subsequent proteasome-mediated degradation of some, but not all, misfolded glycoproteins (By similarity).</text>
</comment>
<comment type="catalytic activity">
    <reaction>
        <text>Hydrolysis of an N(4)-(acetyl-beta-D-glucosaminyl)asparagine residue in which the glucosamine residue may be further glycosylated, to yield a (substituted) N-acetyl-beta-D-glucosaminylamine and a peptide containing an aspartate residue.</text>
        <dbReference type="EC" id="3.5.1.52"/>
    </reaction>
</comment>
<comment type="cofactor">
    <cofactor evidence="1">
        <name>Zn(2+)</name>
        <dbReference type="ChEBI" id="CHEBI:29105"/>
    </cofactor>
    <text evidence="1">Binds 1 zinc ion per subunit.</text>
</comment>
<comment type="subcellular location">
    <subcellularLocation>
        <location evidence="1">Cytoplasm</location>
    </subcellularLocation>
</comment>
<comment type="similarity">
    <text evidence="2">Belongs to the transglutaminase-like superfamily. PNGase family.</text>
</comment>
<keyword id="KW-0963">Cytoplasm</keyword>
<keyword id="KW-0378">Hydrolase</keyword>
<keyword id="KW-0479">Metal-binding</keyword>
<keyword id="KW-1185">Reference proteome</keyword>
<keyword id="KW-0862">Zinc</keyword>
<organism>
    <name type="scientific">Arabidopsis thaliana</name>
    <name type="common">Mouse-ear cress</name>
    <dbReference type="NCBI Taxonomy" id="3702"/>
    <lineage>
        <taxon>Eukaryota</taxon>
        <taxon>Viridiplantae</taxon>
        <taxon>Streptophyta</taxon>
        <taxon>Embryophyta</taxon>
        <taxon>Tracheophyta</taxon>
        <taxon>Spermatophyta</taxon>
        <taxon>Magnoliopsida</taxon>
        <taxon>eudicotyledons</taxon>
        <taxon>Gunneridae</taxon>
        <taxon>Pentapetalae</taxon>
        <taxon>rosids</taxon>
        <taxon>malvids</taxon>
        <taxon>Brassicales</taxon>
        <taxon>Brassicaceae</taxon>
        <taxon>Camelineae</taxon>
        <taxon>Arabidopsis</taxon>
    </lineage>
</organism>
<proteinExistence type="evidence at transcript level"/>
<gene>
    <name type="primary">PNG1</name>
    <name type="ordered locus">At5g49570</name>
    <name type="ORF">K6M13.12</name>
</gene>